<gene>
    <name evidence="1" type="primary">rpmE2</name>
    <name type="synonym">rpmE</name>
    <name type="ordered locus">TW458</name>
</gene>
<evidence type="ECO:0000255" key="1">
    <source>
        <dbReference type="HAMAP-Rule" id="MF_00502"/>
    </source>
</evidence>
<evidence type="ECO:0000305" key="2"/>
<protein>
    <recommendedName>
        <fullName evidence="1">Large ribosomal subunit protein bL31B</fullName>
    </recommendedName>
    <alternativeName>
        <fullName evidence="2">50S ribosomal protein L31 type B</fullName>
    </alternativeName>
</protein>
<name>RL31B_TROW8</name>
<accession>Q83HQ6</accession>
<keyword id="KW-0687">Ribonucleoprotein</keyword>
<keyword id="KW-0689">Ribosomal protein</keyword>
<proteinExistence type="inferred from homology"/>
<dbReference type="EMBL" id="BX251411">
    <property type="protein sequence ID" value="CAD67126.1"/>
    <property type="molecule type" value="Genomic_DNA"/>
</dbReference>
<dbReference type="RefSeq" id="WP_011096406.1">
    <property type="nucleotide sequence ID" value="NC_004551.1"/>
</dbReference>
<dbReference type="SMR" id="Q83HQ6"/>
<dbReference type="GeneID" id="67388235"/>
<dbReference type="KEGG" id="tws:TW458"/>
<dbReference type="HOGENOM" id="CLU_114306_2_2_11"/>
<dbReference type="GO" id="GO:1990904">
    <property type="term" value="C:ribonucleoprotein complex"/>
    <property type="evidence" value="ECO:0007669"/>
    <property type="project" value="UniProtKB-KW"/>
</dbReference>
<dbReference type="GO" id="GO:0005840">
    <property type="term" value="C:ribosome"/>
    <property type="evidence" value="ECO:0007669"/>
    <property type="project" value="UniProtKB-KW"/>
</dbReference>
<dbReference type="GO" id="GO:0003735">
    <property type="term" value="F:structural constituent of ribosome"/>
    <property type="evidence" value="ECO:0007669"/>
    <property type="project" value="InterPro"/>
</dbReference>
<dbReference type="GO" id="GO:0006412">
    <property type="term" value="P:translation"/>
    <property type="evidence" value="ECO:0007669"/>
    <property type="project" value="UniProtKB-UniRule"/>
</dbReference>
<dbReference type="Gene3D" id="4.10.830.30">
    <property type="entry name" value="Ribosomal protein L31"/>
    <property type="match status" value="1"/>
</dbReference>
<dbReference type="HAMAP" id="MF_00502">
    <property type="entry name" value="Ribosomal_bL31_2"/>
    <property type="match status" value="1"/>
</dbReference>
<dbReference type="InterPro" id="IPR034704">
    <property type="entry name" value="Ribosomal_bL28/bL31-like_sf"/>
</dbReference>
<dbReference type="InterPro" id="IPR002150">
    <property type="entry name" value="Ribosomal_bL31"/>
</dbReference>
<dbReference type="InterPro" id="IPR027493">
    <property type="entry name" value="Ribosomal_bL31_B"/>
</dbReference>
<dbReference type="InterPro" id="IPR042105">
    <property type="entry name" value="Ribosomal_bL31_sf"/>
</dbReference>
<dbReference type="NCBIfam" id="TIGR00105">
    <property type="entry name" value="L31"/>
    <property type="match status" value="1"/>
</dbReference>
<dbReference type="NCBIfam" id="NF002462">
    <property type="entry name" value="PRK01678.1"/>
    <property type="match status" value="1"/>
</dbReference>
<dbReference type="PANTHER" id="PTHR33280">
    <property type="entry name" value="50S RIBOSOMAL PROTEIN L31, CHLOROPLASTIC"/>
    <property type="match status" value="1"/>
</dbReference>
<dbReference type="PANTHER" id="PTHR33280:SF1">
    <property type="entry name" value="LARGE RIBOSOMAL SUBUNIT PROTEIN BL31C"/>
    <property type="match status" value="1"/>
</dbReference>
<dbReference type="Pfam" id="PF01197">
    <property type="entry name" value="Ribosomal_L31"/>
    <property type="match status" value="1"/>
</dbReference>
<dbReference type="PRINTS" id="PR01249">
    <property type="entry name" value="RIBOSOMALL31"/>
</dbReference>
<dbReference type="SUPFAM" id="SSF143800">
    <property type="entry name" value="L28p-like"/>
    <property type="match status" value="1"/>
</dbReference>
<dbReference type="PROSITE" id="PS01143">
    <property type="entry name" value="RIBOSOMAL_L31"/>
    <property type="match status" value="1"/>
</dbReference>
<comment type="subunit">
    <text evidence="1">Part of the 50S ribosomal subunit.</text>
</comment>
<comment type="similarity">
    <text evidence="1">Belongs to the bacterial ribosomal protein bL31 family. Type B subfamily.</text>
</comment>
<reference key="1">
    <citation type="journal article" date="2003" name="Lancet">
        <title>Sequencing and analysis of the genome of the Whipple's disease bacterium Tropheryma whipplei.</title>
        <authorList>
            <person name="Bentley S.D."/>
            <person name="Maiwald M."/>
            <person name="Murphy L.D."/>
            <person name="Pallen M.J."/>
            <person name="Yeats C.A."/>
            <person name="Dover L.G."/>
            <person name="Norbertczak H.T."/>
            <person name="Besra G.S."/>
            <person name="Quail M.A."/>
            <person name="Harris D.E."/>
            <person name="von Herbay A."/>
            <person name="Goble A."/>
            <person name="Rutter S."/>
            <person name="Squares R."/>
            <person name="Squares S."/>
            <person name="Barrell B.G."/>
            <person name="Parkhill J."/>
            <person name="Relman D.A."/>
        </authorList>
    </citation>
    <scope>NUCLEOTIDE SEQUENCE [LARGE SCALE GENOMIC DNA]</scope>
    <source>
        <strain>TW08/27</strain>
    </source>
</reference>
<sequence>MKSDIHPEYGYVVFKDLASSEMFLTRSVLKPEKQIEWNDGNHYPLFEVEISSASHPFYTGQQRILDSEGRVEKFYARYKKQSQ</sequence>
<organism>
    <name type="scientific">Tropheryma whipplei (strain TW08/27)</name>
    <name type="common">Whipple's bacillus</name>
    <dbReference type="NCBI Taxonomy" id="218496"/>
    <lineage>
        <taxon>Bacteria</taxon>
        <taxon>Bacillati</taxon>
        <taxon>Actinomycetota</taxon>
        <taxon>Actinomycetes</taxon>
        <taxon>Micrococcales</taxon>
        <taxon>Tropherymataceae</taxon>
        <taxon>Tropheryma</taxon>
    </lineage>
</organism>
<feature type="chain" id="PRO_0000173278" description="Large ribosomal subunit protein bL31B">
    <location>
        <begin position="1"/>
        <end position="83"/>
    </location>
</feature>